<feature type="chain" id="PRO_1000066187" description="Protein-methionine-sulfoxide reductase heme-binding subunit MsrQ">
    <location>
        <begin position="1"/>
        <end position="211"/>
    </location>
</feature>
<feature type="transmembrane region" description="Helical" evidence="1">
    <location>
        <begin position="17"/>
        <end position="37"/>
    </location>
</feature>
<feature type="transmembrane region" description="Helical" evidence="1">
    <location>
        <begin position="82"/>
        <end position="102"/>
    </location>
</feature>
<feature type="transmembrane region" description="Helical" evidence="1">
    <location>
        <begin position="116"/>
        <end position="136"/>
    </location>
</feature>
<feature type="transmembrane region" description="Helical" evidence="1">
    <location>
        <begin position="153"/>
        <end position="173"/>
    </location>
</feature>
<feature type="transmembrane region" description="Helical" evidence="1">
    <location>
        <begin position="178"/>
        <end position="198"/>
    </location>
</feature>
<proteinExistence type="inferred from homology"/>
<protein>
    <recommendedName>
        <fullName evidence="1">Protein-methionine-sulfoxide reductase heme-binding subunit MsrQ</fullName>
    </recommendedName>
    <alternativeName>
        <fullName evidence="1">Flavocytochrome MsrQ</fullName>
    </alternativeName>
</protein>
<evidence type="ECO:0000255" key="1">
    <source>
        <dbReference type="HAMAP-Rule" id="MF_01207"/>
    </source>
</evidence>
<name>MSRQ_SHIBS</name>
<accession>Q322R9</accession>
<comment type="function">
    <text evidence="1">Part of the MsrPQ system that repairs oxidized periplasmic proteins containing methionine sulfoxide residues (Met-O), using respiratory chain electrons. Thus protects these proteins from oxidative-stress damage caused by reactive species of oxygen and chlorine generated by the host defense mechanisms. MsrPQ is essential for the maintenance of envelope integrity under bleach stress, rescuing a wide series of structurally unrelated periplasmic proteins from methionine oxidation, including the primary periplasmic chaperone SurA and the lipoprotein Pal. MsrQ provides electrons for reduction to the reductase catalytic subunit MsrP, using the quinone pool of the respiratory chain.</text>
</comment>
<comment type="cofactor">
    <cofactor evidence="1">
        <name>FMN</name>
        <dbReference type="ChEBI" id="CHEBI:58210"/>
    </cofactor>
    <text evidence="1">Binds 1 FMN per subunit.</text>
</comment>
<comment type="cofactor">
    <cofactor evidence="1">
        <name>heme b</name>
        <dbReference type="ChEBI" id="CHEBI:60344"/>
    </cofactor>
    <text evidence="1">Binds 1 heme b (iron(II)-protoporphyrin IX) group per subunit.</text>
</comment>
<comment type="subunit">
    <text evidence="1">Heterodimer of a catalytic subunit (MsrP) and a heme-binding subunit (MsrQ).</text>
</comment>
<comment type="subcellular location">
    <subcellularLocation>
        <location evidence="1">Cell inner membrane</location>
        <topology evidence="1">Multi-pass membrane protein</topology>
    </subcellularLocation>
</comment>
<comment type="similarity">
    <text evidence="1">Belongs to the MsrQ family.</text>
</comment>
<dbReference type="EMBL" id="CP000036">
    <property type="protein sequence ID" value="ABB65689.1"/>
    <property type="molecule type" value="Genomic_DNA"/>
</dbReference>
<dbReference type="RefSeq" id="WP_001240103.1">
    <property type="nucleotide sequence ID" value="NC_007613.1"/>
</dbReference>
<dbReference type="SMR" id="Q322R9"/>
<dbReference type="KEGG" id="sbo:SBO_1034"/>
<dbReference type="HOGENOM" id="CLU_080662_0_1_6"/>
<dbReference type="Proteomes" id="UP000007067">
    <property type="component" value="Chromosome"/>
</dbReference>
<dbReference type="GO" id="GO:0005886">
    <property type="term" value="C:plasma membrane"/>
    <property type="evidence" value="ECO:0007669"/>
    <property type="project" value="UniProtKB-SubCell"/>
</dbReference>
<dbReference type="GO" id="GO:0009055">
    <property type="term" value="F:electron transfer activity"/>
    <property type="evidence" value="ECO:0007669"/>
    <property type="project" value="UniProtKB-UniRule"/>
</dbReference>
<dbReference type="GO" id="GO:0010181">
    <property type="term" value="F:FMN binding"/>
    <property type="evidence" value="ECO:0007669"/>
    <property type="project" value="UniProtKB-UniRule"/>
</dbReference>
<dbReference type="GO" id="GO:0020037">
    <property type="term" value="F:heme binding"/>
    <property type="evidence" value="ECO:0007669"/>
    <property type="project" value="UniProtKB-UniRule"/>
</dbReference>
<dbReference type="GO" id="GO:0046872">
    <property type="term" value="F:metal ion binding"/>
    <property type="evidence" value="ECO:0007669"/>
    <property type="project" value="UniProtKB-KW"/>
</dbReference>
<dbReference type="GO" id="GO:0016679">
    <property type="term" value="F:oxidoreductase activity, acting on diphenols and related substances as donors"/>
    <property type="evidence" value="ECO:0007669"/>
    <property type="project" value="TreeGrafter"/>
</dbReference>
<dbReference type="GO" id="GO:0030091">
    <property type="term" value="P:protein repair"/>
    <property type="evidence" value="ECO:0007669"/>
    <property type="project" value="UniProtKB-UniRule"/>
</dbReference>
<dbReference type="HAMAP" id="MF_01207">
    <property type="entry name" value="MsrQ"/>
    <property type="match status" value="1"/>
</dbReference>
<dbReference type="InterPro" id="IPR013130">
    <property type="entry name" value="Fe3_Rdtase_TM_dom"/>
</dbReference>
<dbReference type="InterPro" id="IPR022837">
    <property type="entry name" value="MsrQ-like"/>
</dbReference>
<dbReference type="NCBIfam" id="NF003830">
    <property type="entry name" value="PRK05419.1-1"/>
    <property type="match status" value="1"/>
</dbReference>
<dbReference type="NCBIfam" id="NF003831">
    <property type="entry name" value="PRK05419.1-2"/>
    <property type="match status" value="1"/>
</dbReference>
<dbReference type="NCBIfam" id="NF003832">
    <property type="entry name" value="PRK05419.1-4"/>
    <property type="match status" value="1"/>
</dbReference>
<dbReference type="PANTHER" id="PTHR36964">
    <property type="entry name" value="PROTEIN-METHIONINE-SULFOXIDE REDUCTASE HEME-BINDING SUBUNIT MSRQ"/>
    <property type="match status" value="1"/>
</dbReference>
<dbReference type="PANTHER" id="PTHR36964:SF1">
    <property type="entry name" value="PROTEIN-METHIONINE-SULFOXIDE REDUCTASE HEME-BINDING SUBUNIT MSRQ"/>
    <property type="match status" value="1"/>
</dbReference>
<dbReference type="Pfam" id="PF01794">
    <property type="entry name" value="Ferric_reduct"/>
    <property type="match status" value="1"/>
</dbReference>
<keyword id="KW-0997">Cell inner membrane</keyword>
<keyword id="KW-1003">Cell membrane</keyword>
<keyword id="KW-0249">Electron transport</keyword>
<keyword id="KW-0285">Flavoprotein</keyword>
<keyword id="KW-0288">FMN</keyword>
<keyword id="KW-0349">Heme</keyword>
<keyword id="KW-0408">Iron</keyword>
<keyword id="KW-0472">Membrane</keyword>
<keyword id="KW-0479">Metal-binding</keyword>
<keyword id="KW-0812">Transmembrane</keyword>
<keyword id="KW-1133">Transmembrane helix</keyword>
<keyword id="KW-0813">Transport</keyword>
<organism>
    <name type="scientific">Shigella boydii serotype 4 (strain Sb227)</name>
    <dbReference type="NCBI Taxonomy" id="300268"/>
    <lineage>
        <taxon>Bacteria</taxon>
        <taxon>Pseudomonadati</taxon>
        <taxon>Pseudomonadota</taxon>
        <taxon>Gammaproteobacteria</taxon>
        <taxon>Enterobacterales</taxon>
        <taxon>Enterobacteriaceae</taxon>
        <taxon>Shigella</taxon>
    </lineage>
</organism>
<reference key="1">
    <citation type="journal article" date="2005" name="Nucleic Acids Res.">
        <title>Genome dynamics and diversity of Shigella species, the etiologic agents of bacillary dysentery.</title>
        <authorList>
            <person name="Yang F."/>
            <person name="Yang J."/>
            <person name="Zhang X."/>
            <person name="Chen L."/>
            <person name="Jiang Y."/>
            <person name="Yan Y."/>
            <person name="Tang X."/>
            <person name="Wang J."/>
            <person name="Xiong Z."/>
            <person name="Dong J."/>
            <person name="Xue Y."/>
            <person name="Zhu Y."/>
            <person name="Xu X."/>
            <person name="Sun L."/>
            <person name="Chen S."/>
            <person name="Nie H."/>
            <person name="Peng J."/>
            <person name="Xu J."/>
            <person name="Wang Y."/>
            <person name="Yuan Z."/>
            <person name="Wen Y."/>
            <person name="Yao Z."/>
            <person name="Shen Y."/>
            <person name="Qiang B."/>
            <person name="Hou Y."/>
            <person name="Yu J."/>
            <person name="Jin Q."/>
        </authorList>
    </citation>
    <scope>NUCLEOTIDE SEQUENCE [LARGE SCALE GENOMIC DNA]</scope>
    <source>
        <strain>Sb227</strain>
    </source>
</reference>
<gene>
    <name evidence="1" type="primary">msrQ</name>
    <name type="ordered locus">SBO_1034</name>
</gene>
<sequence length="211" mass="23995">MRLTAKQVTWLKVSLHLAGLLPFLWLVWAINHGGLGADPVKDIQHFTGRTALKFLLATLLITPLARYAKQPLLIRTRRLLGLWCFAWATLHLTSYALLELGVNNLALLGKELITRPYLTLGIISWVILLALAFTSTQAMQRKLGKHWQQLHNFVYLVAILAPIHYLWSVKIISPQPLIYAGLAVLLLALRYKKLLSLFNRLRKQAHNKLSL</sequence>